<dbReference type="EMBL" id="AC009978">
    <property type="protein sequence ID" value="AAF17633.1"/>
    <property type="status" value="ALT_SEQ"/>
    <property type="molecule type" value="Genomic_DNA"/>
</dbReference>
<dbReference type="EMBL" id="AC012394">
    <property type="protein sequence ID" value="AAF16666.1"/>
    <property type="molecule type" value="Genomic_DNA"/>
</dbReference>
<dbReference type="EMBL" id="CP002684">
    <property type="protein sequence ID" value="AEE35827.1"/>
    <property type="molecule type" value="Genomic_DNA"/>
</dbReference>
<dbReference type="EMBL" id="CP002684">
    <property type="protein sequence ID" value="ANM59494.1"/>
    <property type="molecule type" value="Genomic_DNA"/>
</dbReference>
<dbReference type="EMBL" id="CP002684">
    <property type="protein sequence ID" value="ANM59495.1"/>
    <property type="molecule type" value="Genomic_DNA"/>
</dbReference>
<dbReference type="EMBL" id="CP002684">
    <property type="protein sequence ID" value="ANM59496.1"/>
    <property type="molecule type" value="Genomic_DNA"/>
</dbReference>
<dbReference type="EMBL" id="AB493537">
    <property type="protein sequence ID" value="BAH30375.1"/>
    <property type="molecule type" value="mRNA"/>
</dbReference>
<dbReference type="PIR" id="A96791">
    <property type="entry name" value="A96791"/>
</dbReference>
<dbReference type="RefSeq" id="NP_001321849.1">
    <property type="nucleotide sequence ID" value="NM_001334725.1"/>
</dbReference>
<dbReference type="RefSeq" id="NP_001321850.1">
    <property type="nucleotide sequence ID" value="NM_001334724.1"/>
</dbReference>
<dbReference type="RefSeq" id="NP_001321851.1">
    <property type="nucleotide sequence ID" value="NM_001334726.1"/>
</dbReference>
<dbReference type="RefSeq" id="NP_177761.1">
    <property type="nucleotide sequence ID" value="NM_106284.5"/>
</dbReference>
<dbReference type="SMR" id="Q9SFW8"/>
<dbReference type="FunCoup" id="Q9SFW8">
    <property type="interactions" value="1008"/>
</dbReference>
<dbReference type="STRING" id="3702.Q9SFW8"/>
<dbReference type="PaxDb" id="3702-AT1G76350.1"/>
<dbReference type="ProteomicsDB" id="251137"/>
<dbReference type="EnsemblPlants" id="AT1G76350.1">
    <property type="protein sequence ID" value="AT1G76350.1"/>
    <property type="gene ID" value="AT1G76350"/>
</dbReference>
<dbReference type="EnsemblPlants" id="AT1G76350.2">
    <property type="protein sequence ID" value="AT1G76350.2"/>
    <property type="gene ID" value="AT1G76350"/>
</dbReference>
<dbReference type="EnsemblPlants" id="AT1G76350.3">
    <property type="protein sequence ID" value="AT1G76350.3"/>
    <property type="gene ID" value="AT1G76350"/>
</dbReference>
<dbReference type="EnsemblPlants" id="AT1G76350.4">
    <property type="protein sequence ID" value="AT1G76350.4"/>
    <property type="gene ID" value="AT1G76350"/>
</dbReference>
<dbReference type="GeneID" id="843967"/>
<dbReference type="Gramene" id="AT1G76350.1">
    <property type="protein sequence ID" value="AT1G76350.1"/>
    <property type="gene ID" value="AT1G76350"/>
</dbReference>
<dbReference type="Gramene" id="AT1G76350.2">
    <property type="protein sequence ID" value="AT1G76350.2"/>
    <property type="gene ID" value="AT1G76350"/>
</dbReference>
<dbReference type="Gramene" id="AT1G76350.3">
    <property type="protein sequence ID" value="AT1G76350.3"/>
    <property type="gene ID" value="AT1G76350"/>
</dbReference>
<dbReference type="Gramene" id="AT1G76350.4">
    <property type="protein sequence ID" value="AT1G76350.4"/>
    <property type="gene ID" value="AT1G76350"/>
</dbReference>
<dbReference type="KEGG" id="ath:AT1G76350"/>
<dbReference type="Araport" id="AT1G76350"/>
<dbReference type="TAIR" id="AT1G76350">
    <property type="gene designation" value="NLP5"/>
</dbReference>
<dbReference type="eggNOG" id="ENOG502QRQ2">
    <property type="taxonomic scope" value="Eukaryota"/>
</dbReference>
<dbReference type="HOGENOM" id="CLU_008971_0_0_1"/>
<dbReference type="InParanoid" id="Q9SFW8"/>
<dbReference type="OMA" id="SESSMFF"/>
<dbReference type="OrthoDB" id="6270329at2759"/>
<dbReference type="PhylomeDB" id="Q9SFW8"/>
<dbReference type="PRO" id="PR:Q9SFW8"/>
<dbReference type="Proteomes" id="UP000006548">
    <property type="component" value="Chromosome 1"/>
</dbReference>
<dbReference type="ExpressionAtlas" id="Q9SFW8">
    <property type="expression patterns" value="baseline and differential"/>
</dbReference>
<dbReference type="GO" id="GO:0005634">
    <property type="term" value="C:nucleus"/>
    <property type="evidence" value="ECO:0007669"/>
    <property type="project" value="UniProtKB-SubCell"/>
</dbReference>
<dbReference type="GO" id="GO:0003700">
    <property type="term" value="F:DNA-binding transcription factor activity"/>
    <property type="evidence" value="ECO:0000250"/>
    <property type="project" value="TAIR"/>
</dbReference>
<dbReference type="GO" id="GO:0000976">
    <property type="term" value="F:transcription cis-regulatory region binding"/>
    <property type="evidence" value="ECO:0000353"/>
    <property type="project" value="TAIR"/>
</dbReference>
<dbReference type="GO" id="GO:0006355">
    <property type="term" value="P:regulation of DNA-templated transcription"/>
    <property type="evidence" value="ECO:0000304"/>
    <property type="project" value="TAIR"/>
</dbReference>
<dbReference type="GO" id="GO:0010167">
    <property type="term" value="P:response to nitrate"/>
    <property type="evidence" value="ECO:0000270"/>
    <property type="project" value="TAIR"/>
</dbReference>
<dbReference type="CDD" id="cd06407">
    <property type="entry name" value="PB1_NLP"/>
    <property type="match status" value="1"/>
</dbReference>
<dbReference type="FunFam" id="3.10.20.90:FF:000186">
    <property type="entry name" value="RWP-RK domain-containing protein"/>
    <property type="match status" value="1"/>
</dbReference>
<dbReference type="Gene3D" id="3.10.20.90">
    <property type="entry name" value="Phosphatidylinositol 3-kinase Catalytic Subunit, Chain A, domain 1"/>
    <property type="match status" value="1"/>
</dbReference>
<dbReference type="InterPro" id="IPR045012">
    <property type="entry name" value="NLP"/>
</dbReference>
<dbReference type="InterPro" id="IPR055081">
    <property type="entry name" value="NLP1-9_GAF"/>
</dbReference>
<dbReference type="InterPro" id="IPR053793">
    <property type="entry name" value="PB1-like"/>
</dbReference>
<dbReference type="InterPro" id="IPR000270">
    <property type="entry name" value="PB1_dom"/>
</dbReference>
<dbReference type="InterPro" id="IPR034891">
    <property type="entry name" value="PB1_NLP"/>
</dbReference>
<dbReference type="InterPro" id="IPR003035">
    <property type="entry name" value="RWP-RK_dom"/>
</dbReference>
<dbReference type="PANTHER" id="PTHR32002:SF36">
    <property type="entry name" value="PROTEIN NLP5"/>
    <property type="match status" value="1"/>
</dbReference>
<dbReference type="PANTHER" id="PTHR32002">
    <property type="entry name" value="PROTEIN NLP8"/>
    <property type="match status" value="1"/>
</dbReference>
<dbReference type="Pfam" id="PF22922">
    <property type="entry name" value="GAF_NLP"/>
    <property type="match status" value="2"/>
</dbReference>
<dbReference type="Pfam" id="PF00564">
    <property type="entry name" value="PB1"/>
    <property type="match status" value="1"/>
</dbReference>
<dbReference type="Pfam" id="PF02042">
    <property type="entry name" value="RWP-RK"/>
    <property type="match status" value="1"/>
</dbReference>
<dbReference type="SMART" id="SM00666">
    <property type="entry name" value="PB1"/>
    <property type="match status" value="1"/>
</dbReference>
<dbReference type="SUPFAM" id="SSF54277">
    <property type="entry name" value="CAD &amp; PB1 domains"/>
    <property type="match status" value="1"/>
</dbReference>
<dbReference type="PROSITE" id="PS51745">
    <property type="entry name" value="PB1"/>
    <property type="match status" value="1"/>
</dbReference>
<dbReference type="PROSITE" id="PS51519">
    <property type="entry name" value="RWP_RK"/>
    <property type="match status" value="1"/>
</dbReference>
<reference key="1">
    <citation type="journal article" date="2000" name="Nature">
        <title>Sequence and analysis of chromosome 1 of the plant Arabidopsis thaliana.</title>
        <authorList>
            <person name="Theologis A."/>
            <person name="Ecker J.R."/>
            <person name="Palm C.J."/>
            <person name="Federspiel N.A."/>
            <person name="Kaul S."/>
            <person name="White O."/>
            <person name="Alonso J."/>
            <person name="Altafi H."/>
            <person name="Araujo R."/>
            <person name="Bowman C.L."/>
            <person name="Brooks S.Y."/>
            <person name="Buehler E."/>
            <person name="Chan A."/>
            <person name="Chao Q."/>
            <person name="Chen H."/>
            <person name="Cheuk R.F."/>
            <person name="Chin C.W."/>
            <person name="Chung M.K."/>
            <person name="Conn L."/>
            <person name="Conway A.B."/>
            <person name="Conway A.R."/>
            <person name="Creasy T.H."/>
            <person name="Dewar K."/>
            <person name="Dunn P."/>
            <person name="Etgu P."/>
            <person name="Feldblyum T.V."/>
            <person name="Feng J.-D."/>
            <person name="Fong B."/>
            <person name="Fujii C.Y."/>
            <person name="Gill J.E."/>
            <person name="Goldsmith A.D."/>
            <person name="Haas B."/>
            <person name="Hansen N.F."/>
            <person name="Hughes B."/>
            <person name="Huizar L."/>
            <person name="Hunter J.L."/>
            <person name="Jenkins J."/>
            <person name="Johnson-Hopson C."/>
            <person name="Khan S."/>
            <person name="Khaykin E."/>
            <person name="Kim C.J."/>
            <person name="Koo H.L."/>
            <person name="Kremenetskaia I."/>
            <person name="Kurtz D.B."/>
            <person name="Kwan A."/>
            <person name="Lam B."/>
            <person name="Langin-Hooper S."/>
            <person name="Lee A."/>
            <person name="Lee J.M."/>
            <person name="Lenz C.A."/>
            <person name="Li J.H."/>
            <person name="Li Y.-P."/>
            <person name="Lin X."/>
            <person name="Liu S.X."/>
            <person name="Liu Z.A."/>
            <person name="Luros J.S."/>
            <person name="Maiti R."/>
            <person name="Marziali A."/>
            <person name="Militscher J."/>
            <person name="Miranda M."/>
            <person name="Nguyen M."/>
            <person name="Nierman W.C."/>
            <person name="Osborne B.I."/>
            <person name="Pai G."/>
            <person name="Peterson J."/>
            <person name="Pham P.K."/>
            <person name="Rizzo M."/>
            <person name="Rooney T."/>
            <person name="Rowley D."/>
            <person name="Sakano H."/>
            <person name="Salzberg S.L."/>
            <person name="Schwartz J.R."/>
            <person name="Shinn P."/>
            <person name="Southwick A.M."/>
            <person name="Sun H."/>
            <person name="Tallon L.J."/>
            <person name="Tambunga G."/>
            <person name="Toriumi M.J."/>
            <person name="Town C.D."/>
            <person name="Utterback T."/>
            <person name="Van Aken S."/>
            <person name="Vaysberg M."/>
            <person name="Vysotskaia V.S."/>
            <person name="Walker M."/>
            <person name="Wu D."/>
            <person name="Yu G."/>
            <person name="Fraser C.M."/>
            <person name="Venter J.C."/>
            <person name="Davis R.W."/>
        </authorList>
    </citation>
    <scope>NUCLEOTIDE SEQUENCE [LARGE SCALE GENOMIC DNA]</scope>
    <source>
        <strain>cv. Columbia</strain>
    </source>
</reference>
<reference key="2">
    <citation type="journal article" date="2017" name="Plant J.">
        <title>Araport11: a complete reannotation of the Arabidopsis thaliana reference genome.</title>
        <authorList>
            <person name="Cheng C.Y."/>
            <person name="Krishnakumar V."/>
            <person name="Chan A.P."/>
            <person name="Thibaud-Nissen F."/>
            <person name="Schobel S."/>
            <person name="Town C.D."/>
        </authorList>
    </citation>
    <scope>GENOME REANNOTATION</scope>
    <source>
        <strain>cv. Columbia</strain>
    </source>
</reference>
<reference key="3">
    <citation type="submission" date="2009-03" db="EMBL/GenBank/DDBJ databases">
        <title>ORF cloning and analysis of Arabidopsis transcription factor genes.</title>
        <authorList>
            <person name="Fujita M."/>
            <person name="Mizukado S."/>
            <person name="Seki M."/>
            <person name="Shinozaki K."/>
            <person name="Mitsuda N."/>
            <person name="Takiguchi Y."/>
            <person name="Takagi M."/>
        </authorList>
    </citation>
    <scope>NUCLEOTIDE SEQUENCE [LARGE SCALE MRNA]</scope>
</reference>
<reference key="4">
    <citation type="journal article" date="2005" name="J. Mol. Evol.">
        <title>Evolution of NIN-like proteins in Arabidopsis, rice, and Lotus japonicus.</title>
        <authorList>
            <person name="Schauser L."/>
            <person name="Wieloch W."/>
            <person name="Stougaard J."/>
        </authorList>
    </citation>
    <scope>GENE FAMILY</scope>
    <scope>NOMENCLATURE</scope>
</reference>
<sequence>MENNSLPMDPAMDSSFMDGLLLEGCWLETTDASEFLNFSPSTSVAPFDPSSFMWSPTQDTSNSLSQMYGQDCPERSSLEDQNQGRDLSTFNRRWWIGPSGHHGFSVMERLVQAVTHIKDFTSERGSLIQLWVPVDRGGKRVLTTKEQPFSHDPMCQRLAHYREISENYQFSTEQEDSDSSSRDLVGLPGRVFLGKVPEWTPDVRFFKNEEYPRVQHAQDCDVRGTLAIPVFEQGSQICLGVIEVVMTTQMVKLSPDLESICRALQAVDLRSTEIPIPPSLKGPDFSYQAALPEIRNLLRCACETHKLPLAQTWVSCLKQSKTGCRHNDENYIHCVSTIDDACYVGDPTVREFHEACSEHHLLKGQGVVGEAFLTNGPCFSSDVSSYKKSEYPLSHHATMFGLHGTVAIRLRCIHTGSVDFVLEFFLPKNCRDIEEQRKMLNALSTIMAHVPRSLRTVTQKELEEEGDSMVSEVIEKGVTLPKIENTTEVHQSISTPQNVGLVFDGGTTEMGELGSEYGKGVSVNENNTFSSASGFNRVTEKKRTKAEKNITLDVLRQYFAGSLKDAAKSIGVCPTTLKRICRQHGIQRWPSRKIKKVGHSLQKIQRVIDSVEGVSGHHLPIGSFYASFPNLAASPEASSLQQQSKITTFLSYSHSPPAKSPGSSCSHSSSCSSETQVIKEDPTDKTRLVSRSFKETQTTHLSPSSQEDDFLRVKVSYEEEKIRFKMRNSHRLKDLLWEIAKRFSIEDVSRYDLKYLDEDNEWVLLRCDDDVEECVDVCRSFPGQTIKLLLQLSSSYLPERSSVSGCLS</sequence>
<feature type="chain" id="PRO_0000401490" description="Protein NLP5">
    <location>
        <begin position="1"/>
        <end position="808"/>
    </location>
</feature>
<feature type="domain" description="RWP-RK" evidence="2">
    <location>
        <begin position="536"/>
        <end position="617"/>
    </location>
</feature>
<feature type="domain" description="PB1" evidence="3">
    <location>
        <begin position="710"/>
        <end position="793"/>
    </location>
</feature>
<feature type="region of interest" description="Disordered" evidence="4">
    <location>
        <begin position="56"/>
        <end position="83"/>
    </location>
</feature>
<feature type="region of interest" description="Disordered" evidence="4">
    <location>
        <begin position="660"/>
        <end position="680"/>
    </location>
</feature>
<feature type="compositionally biased region" description="Polar residues" evidence="4">
    <location>
        <begin position="56"/>
        <end position="68"/>
    </location>
</feature>
<feature type="compositionally biased region" description="Low complexity" evidence="4">
    <location>
        <begin position="663"/>
        <end position="673"/>
    </location>
</feature>
<organism>
    <name type="scientific">Arabidopsis thaliana</name>
    <name type="common">Mouse-ear cress</name>
    <dbReference type="NCBI Taxonomy" id="3702"/>
    <lineage>
        <taxon>Eukaryota</taxon>
        <taxon>Viridiplantae</taxon>
        <taxon>Streptophyta</taxon>
        <taxon>Embryophyta</taxon>
        <taxon>Tracheophyta</taxon>
        <taxon>Spermatophyta</taxon>
        <taxon>Magnoliopsida</taxon>
        <taxon>eudicotyledons</taxon>
        <taxon>Gunneridae</taxon>
        <taxon>Pentapetalae</taxon>
        <taxon>rosids</taxon>
        <taxon>malvids</taxon>
        <taxon>Brassicales</taxon>
        <taxon>Brassicaceae</taxon>
        <taxon>Camelineae</taxon>
        <taxon>Arabidopsis</taxon>
    </lineage>
</organism>
<proteinExistence type="evidence at transcript level"/>
<evidence type="ECO:0000250" key="1"/>
<evidence type="ECO:0000255" key="2">
    <source>
        <dbReference type="PROSITE-ProRule" id="PRU00852"/>
    </source>
</evidence>
<evidence type="ECO:0000255" key="3">
    <source>
        <dbReference type="PROSITE-ProRule" id="PRU01081"/>
    </source>
</evidence>
<evidence type="ECO:0000256" key="4">
    <source>
        <dbReference type="SAM" id="MobiDB-lite"/>
    </source>
</evidence>
<evidence type="ECO:0000305" key="5"/>
<accession>Q9SFW8</accession>
<accession>Q9SGQ2</accession>
<gene>
    <name type="primary">NLP5</name>
    <name type="ordered locus">At1g76350</name>
    <name type="ORF">F15M4.15</name>
    <name type="ORF">T23E18.27</name>
</gene>
<name>NLP5_ARATH</name>
<protein>
    <recommendedName>
        <fullName>Protein NLP5</fullName>
        <shortName>AtNLP5</shortName>
    </recommendedName>
    <alternativeName>
        <fullName>NIN-like protein 5</fullName>
    </alternativeName>
    <alternativeName>
        <fullName>Nodule inception protein-like protein 5</fullName>
    </alternativeName>
</protein>
<comment type="function">
    <text evidence="1">Probable transcription factor.</text>
</comment>
<comment type="subcellular location">
    <subcellularLocation>
        <location evidence="2">Nucleus</location>
    </subcellularLocation>
</comment>
<comment type="sequence caution" evidence="5">
    <conflict type="erroneous gene model prediction">
        <sequence resource="EMBL-CDS" id="AAF17633"/>
    </conflict>
</comment>
<keyword id="KW-0238">DNA-binding</keyword>
<keyword id="KW-0539">Nucleus</keyword>
<keyword id="KW-1185">Reference proteome</keyword>
<keyword id="KW-0804">Transcription</keyword>
<keyword id="KW-0805">Transcription regulation</keyword>